<evidence type="ECO:0000255" key="1">
    <source>
        <dbReference type="HAMAP-Rule" id="MF_00001"/>
    </source>
</evidence>
<reference key="1">
    <citation type="journal article" date="2008" name="Genome Biol.">
        <title>A genomic analysis of the archaeal system Ignicoccus hospitalis-Nanoarchaeum equitans.</title>
        <authorList>
            <person name="Podar M."/>
            <person name="Anderson I."/>
            <person name="Makarova K.S."/>
            <person name="Elkins J.G."/>
            <person name="Ivanova N."/>
            <person name="Wall M.A."/>
            <person name="Lykidis A."/>
            <person name="Mavromatis K."/>
            <person name="Sun H."/>
            <person name="Hudson M.E."/>
            <person name="Chen W."/>
            <person name="Deciu C."/>
            <person name="Hutchison D."/>
            <person name="Eads J.R."/>
            <person name="Anderson A."/>
            <person name="Fernandes F."/>
            <person name="Szeto E."/>
            <person name="Lapidus A."/>
            <person name="Kyrpides N.C."/>
            <person name="Saier M.H. Jr."/>
            <person name="Richardson P.M."/>
            <person name="Rachel R."/>
            <person name="Huber H."/>
            <person name="Eisen J.A."/>
            <person name="Koonin E.V."/>
            <person name="Keller M."/>
            <person name="Stetter K.O."/>
        </authorList>
    </citation>
    <scope>NUCLEOTIDE SEQUENCE [LARGE SCALE GENOMIC DNA]</scope>
    <source>
        <strain>KIN4/I / DSM 18386 / JCM 14125</strain>
    </source>
</reference>
<name>PYRB_IGNH4</name>
<protein>
    <recommendedName>
        <fullName evidence="1">Aspartate carbamoyltransferase catalytic subunit</fullName>
        <ecNumber evidence="1">2.1.3.2</ecNumber>
    </recommendedName>
    <alternativeName>
        <fullName evidence="1">Aspartate transcarbamylase</fullName>
        <shortName evidence="1">ATCase</shortName>
    </alternativeName>
</protein>
<comment type="function">
    <text evidence="1">Catalyzes the condensation of carbamoyl phosphate and aspartate to form carbamoyl aspartate and inorganic phosphate, the committed step in the de novo pyrimidine nucleotide biosynthesis pathway.</text>
</comment>
<comment type="catalytic activity">
    <reaction evidence="1">
        <text>carbamoyl phosphate + L-aspartate = N-carbamoyl-L-aspartate + phosphate + H(+)</text>
        <dbReference type="Rhea" id="RHEA:20013"/>
        <dbReference type="ChEBI" id="CHEBI:15378"/>
        <dbReference type="ChEBI" id="CHEBI:29991"/>
        <dbReference type="ChEBI" id="CHEBI:32814"/>
        <dbReference type="ChEBI" id="CHEBI:43474"/>
        <dbReference type="ChEBI" id="CHEBI:58228"/>
        <dbReference type="EC" id="2.1.3.2"/>
    </reaction>
</comment>
<comment type="pathway">
    <text evidence="1">Pyrimidine metabolism; UMP biosynthesis via de novo pathway; (S)-dihydroorotate from bicarbonate: step 2/3.</text>
</comment>
<comment type="subunit">
    <text evidence="1">Heterooligomer of catalytic and regulatory chains.</text>
</comment>
<comment type="similarity">
    <text evidence="1">Belongs to the aspartate/ornithine carbamoyltransferase superfamily. ATCase family.</text>
</comment>
<gene>
    <name evidence="1" type="primary">pyrB</name>
    <name type="ordered locus">Igni_0044</name>
</gene>
<proteinExistence type="inferred from homology"/>
<keyword id="KW-0665">Pyrimidine biosynthesis</keyword>
<keyword id="KW-1185">Reference proteome</keyword>
<keyword id="KW-0808">Transferase</keyword>
<accession>A8A8H6</accession>
<feature type="chain" id="PRO_1000000009" description="Aspartate carbamoyltransferase catalytic subunit">
    <location>
        <begin position="1"/>
        <end position="305"/>
    </location>
</feature>
<feature type="binding site" evidence="1">
    <location>
        <position position="53"/>
    </location>
    <ligand>
        <name>carbamoyl phosphate</name>
        <dbReference type="ChEBI" id="CHEBI:58228"/>
    </ligand>
</feature>
<feature type="binding site" evidence="1">
    <location>
        <position position="54"/>
    </location>
    <ligand>
        <name>carbamoyl phosphate</name>
        <dbReference type="ChEBI" id="CHEBI:58228"/>
    </ligand>
</feature>
<feature type="binding site" evidence="1">
    <location>
        <position position="82"/>
    </location>
    <ligand>
        <name>L-aspartate</name>
        <dbReference type="ChEBI" id="CHEBI:29991"/>
    </ligand>
</feature>
<feature type="binding site" evidence="1">
    <location>
        <position position="103"/>
    </location>
    <ligand>
        <name>carbamoyl phosphate</name>
        <dbReference type="ChEBI" id="CHEBI:58228"/>
    </ligand>
</feature>
<feature type="binding site" evidence="1">
    <location>
        <position position="131"/>
    </location>
    <ligand>
        <name>carbamoyl phosphate</name>
        <dbReference type="ChEBI" id="CHEBI:58228"/>
    </ligand>
</feature>
<feature type="binding site" evidence="1">
    <location>
        <position position="134"/>
    </location>
    <ligand>
        <name>carbamoyl phosphate</name>
        <dbReference type="ChEBI" id="CHEBI:58228"/>
    </ligand>
</feature>
<feature type="binding site" evidence="1">
    <location>
        <position position="164"/>
    </location>
    <ligand>
        <name>L-aspartate</name>
        <dbReference type="ChEBI" id="CHEBI:29991"/>
    </ligand>
</feature>
<feature type="binding site" evidence="1">
    <location>
        <position position="226"/>
    </location>
    <ligand>
        <name>L-aspartate</name>
        <dbReference type="ChEBI" id="CHEBI:29991"/>
    </ligand>
</feature>
<feature type="binding site" evidence="1">
    <location>
        <position position="265"/>
    </location>
    <ligand>
        <name>carbamoyl phosphate</name>
        <dbReference type="ChEBI" id="CHEBI:58228"/>
    </ligand>
</feature>
<feature type="binding site" evidence="1">
    <location>
        <position position="266"/>
    </location>
    <ligand>
        <name>carbamoyl phosphate</name>
        <dbReference type="ChEBI" id="CHEBI:58228"/>
    </ligand>
</feature>
<dbReference type="EC" id="2.1.3.2" evidence="1"/>
<dbReference type="EMBL" id="CP000816">
    <property type="protein sequence ID" value="ABU81228.1"/>
    <property type="molecule type" value="Genomic_DNA"/>
</dbReference>
<dbReference type="RefSeq" id="WP_011998080.1">
    <property type="nucleotide sequence ID" value="NC_009776.1"/>
</dbReference>
<dbReference type="SMR" id="A8A8H6"/>
<dbReference type="STRING" id="453591.Igni_0044"/>
<dbReference type="GeneID" id="5562632"/>
<dbReference type="KEGG" id="iho:Igni_0044"/>
<dbReference type="eggNOG" id="arCOG00911">
    <property type="taxonomic scope" value="Archaea"/>
</dbReference>
<dbReference type="HOGENOM" id="CLU_043846_1_2_2"/>
<dbReference type="OrthoDB" id="7792at2157"/>
<dbReference type="PhylomeDB" id="A8A8H6"/>
<dbReference type="UniPathway" id="UPA00070">
    <property type="reaction ID" value="UER00116"/>
</dbReference>
<dbReference type="Proteomes" id="UP000000262">
    <property type="component" value="Chromosome"/>
</dbReference>
<dbReference type="GO" id="GO:0016597">
    <property type="term" value="F:amino acid binding"/>
    <property type="evidence" value="ECO:0007669"/>
    <property type="project" value="InterPro"/>
</dbReference>
<dbReference type="GO" id="GO:0004070">
    <property type="term" value="F:aspartate carbamoyltransferase activity"/>
    <property type="evidence" value="ECO:0007669"/>
    <property type="project" value="UniProtKB-UniRule"/>
</dbReference>
<dbReference type="GO" id="GO:0006207">
    <property type="term" value="P:'de novo' pyrimidine nucleobase biosynthetic process"/>
    <property type="evidence" value="ECO:0007669"/>
    <property type="project" value="InterPro"/>
</dbReference>
<dbReference type="GO" id="GO:0044205">
    <property type="term" value="P:'de novo' UMP biosynthetic process"/>
    <property type="evidence" value="ECO:0007669"/>
    <property type="project" value="UniProtKB-UniRule"/>
</dbReference>
<dbReference type="GO" id="GO:0006520">
    <property type="term" value="P:amino acid metabolic process"/>
    <property type="evidence" value="ECO:0007669"/>
    <property type="project" value="InterPro"/>
</dbReference>
<dbReference type="FunFam" id="3.40.50.1370:FF:000002">
    <property type="entry name" value="Aspartate carbamoyltransferase 2"/>
    <property type="match status" value="1"/>
</dbReference>
<dbReference type="Gene3D" id="3.40.50.1370">
    <property type="entry name" value="Aspartate/ornithine carbamoyltransferase"/>
    <property type="match status" value="2"/>
</dbReference>
<dbReference type="HAMAP" id="MF_00001">
    <property type="entry name" value="Asp_carb_tr"/>
    <property type="match status" value="1"/>
</dbReference>
<dbReference type="InterPro" id="IPR006132">
    <property type="entry name" value="Asp/Orn_carbamoyltranf_P-bd"/>
</dbReference>
<dbReference type="InterPro" id="IPR006130">
    <property type="entry name" value="Asp/Orn_carbamoylTrfase"/>
</dbReference>
<dbReference type="InterPro" id="IPR036901">
    <property type="entry name" value="Asp/Orn_carbamoylTrfase_sf"/>
</dbReference>
<dbReference type="InterPro" id="IPR002082">
    <property type="entry name" value="Asp_carbamoyltransf"/>
</dbReference>
<dbReference type="InterPro" id="IPR006131">
    <property type="entry name" value="Asp_carbamoyltransf_Asp/Orn-bd"/>
</dbReference>
<dbReference type="NCBIfam" id="TIGR00670">
    <property type="entry name" value="asp_carb_tr"/>
    <property type="match status" value="1"/>
</dbReference>
<dbReference type="NCBIfam" id="NF002032">
    <property type="entry name" value="PRK00856.1"/>
    <property type="match status" value="1"/>
</dbReference>
<dbReference type="PANTHER" id="PTHR45753:SF6">
    <property type="entry name" value="ASPARTATE CARBAMOYLTRANSFERASE"/>
    <property type="match status" value="1"/>
</dbReference>
<dbReference type="PANTHER" id="PTHR45753">
    <property type="entry name" value="ORNITHINE CARBAMOYLTRANSFERASE, MITOCHONDRIAL"/>
    <property type="match status" value="1"/>
</dbReference>
<dbReference type="Pfam" id="PF00185">
    <property type="entry name" value="OTCace"/>
    <property type="match status" value="1"/>
</dbReference>
<dbReference type="Pfam" id="PF02729">
    <property type="entry name" value="OTCace_N"/>
    <property type="match status" value="1"/>
</dbReference>
<dbReference type="PRINTS" id="PR00100">
    <property type="entry name" value="AOTCASE"/>
</dbReference>
<dbReference type="PRINTS" id="PR00101">
    <property type="entry name" value="ATCASE"/>
</dbReference>
<dbReference type="SUPFAM" id="SSF53671">
    <property type="entry name" value="Aspartate/ornithine carbamoyltransferase"/>
    <property type="match status" value="1"/>
</dbReference>
<dbReference type="PROSITE" id="PS00097">
    <property type="entry name" value="CARBAMOYLTRANSFERASE"/>
    <property type="match status" value="1"/>
</dbReference>
<sequence length="305" mass="34345">MPDVVDVLDLDKKDMIKIFELAEDIEYKKLHKSKWCALENKTVSLLFVEPSTRTRLSFEESAKRLCAHTLTIVGEEASSFVKGESLYDTIKVLDKISDIIVIRHNLDGSAKYASEVAANPVINAGDGKNQHPTQSLIDLYVVRKRKGGLEDLRYAVVGDLRYARTARSFLLALTKFKPRSVYLVAPEVLKPSIKFLEELKSMGLNVFEVDRLEDVIPNVDVIYVTRIQKERFPDPSEYEKVKGSYKITLDLIKRGKGDLIVLHPLPRVDELDVRIDSTPHAAYFDQVAASVPVRMATLAWSAGVV</sequence>
<organism>
    <name type="scientific">Ignicoccus hospitalis (strain KIN4/I / DSM 18386 / JCM 14125)</name>
    <dbReference type="NCBI Taxonomy" id="453591"/>
    <lineage>
        <taxon>Archaea</taxon>
        <taxon>Thermoproteota</taxon>
        <taxon>Thermoprotei</taxon>
        <taxon>Desulfurococcales</taxon>
        <taxon>Desulfurococcaceae</taxon>
        <taxon>Ignicoccus</taxon>
    </lineage>
</organism>